<organism>
    <name type="scientific">Metallosphaera sedula (strain ATCC 51363 / DSM 5348 / JCM 9185 / NBRC 15509 / TH2)</name>
    <dbReference type="NCBI Taxonomy" id="399549"/>
    <lineage>
        <taxon>Archaea</taxon>
        <taxon>Thermoproteota</taxon>
        <taxon>Thermoprotei</taxon>
        <taxon>Sulfolobales</taxon>
        <taxon>Sulfolobaceae</taxon>
        <taxon>Metallosphaera</taxon>
    </lineage>
</organism>
<name>HIS1_METS5</name>
<dbReference type="EC" id="2.4.2.17" evidence="1"/>
<dbReference type="EMBL" id="CP000682">
    <property type="protein sequence ID" value="ABP96083.1"/>
    <property type="molecule type" value="Genomic_DNA"/>
</dbReference>
<dbReference type="RefSeq" id="WP_012021870.1">
    <property type="nucleotide sequence ID" value="NZ_CP139956.1"/>
</dbReference>
<dbReference type="SMR" id="A4YI31"/>
<dbReference type="STRING" id="399549.Msed_1943"/>
<dbReference type="GeneID" id="97612950"/>
<dbReference type="KEGG" id="mse:Msed_1943"/>
<dbReference type="eggNOG" id="arCOG02208">
    <property type="taxonomic scope" value="Archaea"/>
</dbReference>
<dbReference type="HOGENOM" id="CLU_038115_1_1_2"/>
<dbReference type="UniPathway" id="UPA00031">
    <property type="reaction ID" value="UER00006"/>
</dbReference>
<dbReference type="Proteomes" id="UP000000242">
    <property type="component" value="Chromosome"/>
</dbReference>
<dbReference type="GO" id="GO:0005737">
    <property type="term" value="C:cytoplasm"/>
    <property type="evidence" value="ECO:0007669"/>
    <property type="project" value="UniProtKB-SubCell"/>
</dbReference>
<dbReference type="GO" id="GO:0005524">
    <property type="term" value="F:ATP binding"/>
    <property type="evidence" value="ECO:0007669"/>
    <property type="project" value="UniProtKB-KW"/>
</dbReference>
<dbReference type="GO" id="GO:0003879">
    <property type="term" value="F:ATP phosphoribosyltransferase activity"/>
    <property type="evidence" value="ECO:0007669"/>
    <property type="project" value="UniProtKB-UniRule"/>
</dbReference>
<dbReference type="GO" id="GO:0000287">
    <property type="term" value="F:magnesium ion binding"/>
    <property type="evidence" value="ECO:0007669"/>
    <property type="project" value="UniProtKB-UniRule"/>
</dbReference>
<dbReference type="GO" id="GO:0000105">
    <property type="term" value="P:L-histidine biosynthetic process"/>
    <property type="evidence" value="ECO:0007669"/>
    <property type="project" value="UniProtKB-UniRule"/>
</dbReference>
<dbReference type="CDD" id="cd13594">
    <property type="entry name" value="PBP2_HisGL4"/>
    <property type="match status" value="1"/>
</dbReference>
<dbReference type="FunFam" id="3.30.70.120:FF:000002">
    <property type="entry name" value="ATP phosphoribosyltransferase"/>
    <property type="match status" value="1"/>
</dbReference>
<dbReference type="Gene3D" id="3.30.70.120">
    <property type="match status" value="1"/>
</dbReference>
<dbReference type="Gene3D" id="3.40.190.10">
    <property type="entry name" value="Periplasmic binding protein-like II"/>
    <property type="match status" value="2"/>
</dbReference>
<dbReference type="HAMAP" id="MF_00079">
    <property type="entry name" value="HisG_Long"/>
    <property type="match status" value="1"/>
</dbReference>
<dbReference type="InterPro" id="IPR020621">
    <property type="entry name" value="ATP-PRT_HisG_long"/>
</dbReference>
<dbReference type="InterPro" id="IPR013820">
    <property type="entry name" value="ATP_PRibTrfase_cat"/>
</dbReference>
<dbReference type="InterPro" id="IPR018198">
    <property type="entry name" value="ATP_PRibTrfase_CS"/>
</dbReference>
<dbReference type="InterPro" id="IPR001348">
    <property type="entry name" value="ATP_PRibTrfase_HisG"/>
</dbReference>
<dbReference type="InterPro" id="IPR013115">
    <property type="entry name" value="HisG_C"/>
</dbReference>
<dbReference type="InterPro" id="IPR011322">
    <property type="entry name" value="N-reg_PII-like_a/b"/>
</dbReference>
<dbReference type="InterPro" id="IPR015867">
    <property type="entry name" value="N-reg_PII/ATP_PRibTrfase_C"/>
</dbReference>
<dbReference type="NCBIfam" id="TIGR00070">
    <property type="entry name" value="hisG"/>
    <property type="match status" value="1"/>
</dbReference>
<dbReference type="NCBIfam" id="TIGR03455">
    <property type="entry name" value="HisG_C-term"/>
    <property type="match status" value="1"/>
</dbReference>
<dbReference type="PANTHER" id="PTHR21403:SF10">
    <property type="entry name" value="ATP PHOSPHORIBOSYLTRANSFERASE"/>
    <property type="match status" value="1"/>
</dbReference>
<dbReference type="PANTHER" id="PTHR21403">
    <property type="entry name" value="ATP PHOSPHORIBOSYLTRANSFERASE ATP-PRTASE"/>
    <property type="match status" value="1"/>
</dbReference>
<dbReference type="Pfam" id="PF01634">
    <property type="entry name" value="HisG"/>
    <property type="match status" value="1"/>
</dbReference>
<dbReference type="Pfam" id="PF08029">
    <property type="entry name" value="HisG_C"/>
    <property type="match status" value="1"/>
</dbReference>
<dbReference type="SUPFAM" id="SSF54913">
    <property type="entry name" value="GlnB-like"/>
    <property type="match status" value="1"/>
</dbReference>
<dbReference type="SUPFAM" id="SSF53850">
    <property type="entry name" value="Periplasmic binding protein-like II"/>
    <property type="match status" value="1"/>
</dbReference>
<dbReference type="PROSITE" id="PS01316">
    <property type="entry name" value="ATP_P_PHORIBOSYLTR"/>
    <property type="match status" value="1"/>
</dbReference>
<accession>A4YI31</accession>
<feature type="chain" id="PRO_1000071207" description="ATP phosphoribosyltransferase">
    <location>
        <begin position="1"/>
        <end position="285"/>
    </location>
</feature>
<reference key="1">
    <citation type="journal article" date="2008" name="Appl. Environ. Microbiol.">
        <title>The genome sequence of the metal-mobilizing, extremely thermoacidophilic archaeon Metallosphaera sedula provides insights into bioleaching-associated metabolism.</title>
        <authorList>
            <person name="Auernik K.S."/>
            <person name="Maezato Y."/>
            <person name="Blum P.H."/>
            <person name="Kelly R.M."/>
        </authorList>
    </citation>
    <scope>NUCLEOTIDE SEQUENCE [LARGE SCALE GENOMIC DNA]</scope>
    <source>
        <strain>ATCC 51363 / DSM 5348 / JCM 9185 / NBRC 15509 / TH2</strain>
    </source>
</reference>
<keyword id="KW-0028">Amino-acid biosynthesis</keyword>
<keyword id="KW-0067">ATP-binding</keyword>
<keyword id="KW-0963">Cytoplasm</keyword>
<keyword id="KW-0328">Glycosyltransferase</keyword>
<keyword id="KW-0368">Histidine biosynthesis</keyword>
<keyword id="KW-0460">Magnesium</keyword>
<keyword id="KW-0479">Metal-binding</keyword>
<keyword id="KW-0547">Nucleotide-binding</keyword>
<keyword id="KW-1185">Reference proteome</keyword>
<keyword id="KW-0808">Transferase</keyword>
<proteinExistence type="inferred from homology"/>
<protein>
    <recommendedName>
        <fullName evidence="1">ATP phosphoribosyltransferase</fullName>
        <shortName evidence="1">ATP-PRT</shortName>
        <shortName evidence="1">ATP-PRTase</shortName>
        <ecNumber evidence="1">2.4.2.17</ecNumber>
    </recommendedName>
</protein>
<evidence type="ECO:0000255" key="1">
    <source>
        <dbReference type="HAMAP-Rule" id="MF_00079"/>
    </source>
</evidence>
<gene>
    <name evidence="1" type="primary">hisG</name>
    <name type="ordered locus">Msed_1943</name>
</gene>
<comment type="function">
    <text evidence="1">Catalyzes the condensation of ATP and 5-phosphoribose 1-diphosphate to form N'-(5'-phosphoribosyl)-ATP (PR-ATP). Has a crucial role in the pathway because the rate of histidine biosynthesis seems to be controlled primarily by regulation of HisG enzymatic activity.</text>
</comment>
<comment type="catalytic activity">
    <reaction evidence="1">
        <text>1-(5-phospho-beta-D-ribosyl)-ATP + diphosphate = 5-phospho-alpha-D-ribose 1-diphosphate + ATP</text>
        <dbReference type="Rhea" id="RHEA:18473"/>
        <dbReference type="ChEBI" id="CHEBI:30616"/>
        <dbReference type="ChEBI" id="CHEBI:33019"/>
        <dbReference type="ChEBI" id="CHEBI:58017"/>
        <dbReference type="ChEBI" id="CHEBI:73183"/>
        <dbReference type="EC" id="2.4.2.17"/>
    </reaction>
</comment>
<comment type="cofactor">
    <cofactor evidence="1">
        <name>Mg(2+)</name>
        <dbReference type="ChEBI" id="CHEBI:18420"/>
    </cofactor>
</comment>
<comment type="activity regulation">
    <text evidence="1">Feedback inhibited by histidine.</text>
</comment>
<comment type="pathway">
    <text evidence="1">Amino-acid biosynthesis; L-histidine biosynthesis; L-histidine from 5-phospho-alpha-D-ribose 1-diphosphate: step 1/9.</text>
</comment>
<comment type="subcellular location">
    <subcellularLocation>
        <location evidence="1">Cytoplasm</location>
    </subcellularLocation>
</comment>
<comment type="similarity">
    <text evidence="1">Belongs to the ATP phosphoribosyltransferase family. Long subfamily.</text>
</comment>
<sequence>MKIAIPNKGRLQGPALQFLNSVGIKPMANDDRALMVPTSWEGVQLVTIRTEDIPNIVETGAVDLGITGLDYVMESGADVEELVKLDFGKSRLVLAVPMSWNIEDPRDMPKNVRIATKYHNIARAYLERKGIEARLVKISGAAEIMPSLGAADAIIDVTSTGTTLKLHGLKPIDVVSESYAMVIGNKNWMKSEEADRINLVLTMMKGALSARGKKMIFMNVDDVNLEAVVSSLPAMLAPAVSKLSNSNAWEVVTVTDEEMLPEVIAKAKTAGARDIVVVNIEKVIK</sequence>